<protein>
    <recommendedName>
        <fullName evidence="1">UPF0229 protein ECA2349</fullName>
    </recommendedName>
</protein>
<proteinExistence type="inferred from homology"/>
<sequence length="424" mass="49377">MAYFIDRRLNGKNKSTVNRQRFLRRYKSQIKQSISEAINKRSVTDIESGESVSIPNADINEPMFHQGRGGHRHRVHPGNDHFVQNDKIERPQGGGGSGSGQGDASKDGEGDDEFVFQISKDEYLDLLFEDLALPNLKKTQHRQMTEYKMHRAGYTANGVPANISVVRSLQNSLARRMAMTAGKRRTLHELEESLEQLAYTEPAQLLEEERLREDIAELRKKIARVPFIDTFDLRYKNYERRAEPSSQAVMFCLMDVSGSMDQATKDMAKRFYILLYLFLSRNYKNVDVVYIRHHTQAKEVDEQEFFYSQETGGTIVSSALKLMEEVVRERYDPSQWNIYAAQASDGDNWADDSPLCHQILASKLLPMVRYYSYIEITRRSHQTLWREYETLRDTFDNFAMQHIRDQDDIYPVFRELFRKQTVGH</sequence>
<feature type="chain" id="PRO_1000066860" description="UPF0229 protein ECA2349">
    <location>
        <begin position="1"/>
        <end position="424"/>
    </location>
</feature>
<feature type="region of interest" description="Disordered" evidence="2">
    <location>
        <begin position="53"/>
        <end position="111"/>
    </location>
</feature>
<feature type="compositionally biased region" description="Basic and acidic residues" evidence="2">
    <location>
        <begin position="77"/>
        <end position="90"/>
    </location>
</feature>
<feature type="compositionally biased region" description="Gly residues" evidence="2">
    <location>
        <begin position="92"/>
        <end position="101"/>
    </location>
</feature>
<organism>
    <name type="scientific">Pectobacterium atrosepticum (strain SCRI 1043 / ATCC BAA-672)</name>
    <name type="common">Erwinia carotovora subsp. atroseptica</name>
    <dbReference type="NCBI Taxonomy" id="218491"/>
    <lineage>
        <taxon>Bacteria</taxon>
        <taxon>Pseudomonadati</taxon>
        <taxon>Pseudomonadota</taxon>
        <taxon>Gammaproteobacteria</taxon>
        <taxon>Enterobacterales</taxon>
        <taxon>Pectobacteriaceae</taxon>
        <taxon>Pectobacterium</taxon>
    </lineage>
</organism>
<name>Y2349_PECAS</name>
<accession>Q6D4P1</accession>
<dbReference type="EMBL" id="BX950851">
    <property type="protein sequence ID" value="CAG75252.1"/>
    <property type="molecule type" value="Genomic_DNA"/>
</dbReference>
<dbReference type="RefSeq" id="WP_011093906.1">
    <property type="nucleotide sequence ID" value="NC_004547.2"/>
</dbReference>
<dbReference type="SMR" id="Q6D4P1"/>
<dbReference type="STRING" id="218491.ECA2349"/>
<dbReference type="GeneID" id="57208934"/>
<dbReference type="KEGG" id="eca:ECA2349"/>
<dbReference type="PATRIC" id="fig|218491.5.peg.2375"/>
<dbReference type="eggNOG" id="COG2718">
    <property type="taxonomic scope" value="Bacteria"/>
</dbReference>
<dbReference type="HOGENOM" id="CLU_049702_0_0_6"/>
<dbReference type="OrthoDB" id="9788289at2"/>
<dbReference type="Proteomes" id="UP000007966">
    <property type="component" value="Chromosome"/>
</dbReference>
<dbReference type="HAMAP" id="MF_01232">
    <property type="entry name" value="UPF0229"/>
    <property type="match status" value="1"/>
</dbReference>
<dbReference type="InterPro" id="IPR006698">
    <property type="entry name" value="UPF0229"/>
</dbReference>
<dbReference type="NCBIfam" id="NF003707">
    <property type="entry name" value="PRK05325.1-2"/>
    <property type="match status" value="1"/>
</dbReference>
<dbReference type="NCBIfam" id="NF003708">
    <property type="entry name" value="PRK05325.1-3"/>
    <property type="match status" value="1"/>
</dbReference>
<dbReference type="PANTHER" id="PTHR30510">
    <property type="entry name" value="UPF0229 PROTEIN YEAH"/>
    <property type="match status" value="1"/>
</dbReference>
<dbReference type="PANTHER" id="PTHR30510:SF2">
    <property type="entry name" value="UPF0229 PROTEIN YEAH"/>
    <property type="match status" value="1"/>
</dbReference>
<dbReference type="Pfam" id="PF04285">
    <property type="entry name" value="DUF444"/>
    <property type="match status" value="1"/>
</dbReference>
<evidence type="ECO:0000255" key="1">
    <source>
        <dbReference type="HAMAP-Rule" id="MF_01232"/>
    </source>
</evidence>
<evidence type="ECO:0000256" key="2">
    <source>
        <dbReference type="SAM" id="MobiDB-lite"/>
    </source>
</evidence>
<keyword id="KW-1185">Reference proteome</keyword>
<reference key="1">
    <citation type="journal article" date="2004" name="Proc. Natl. Acad. Sci. U.S.A.">
        <title>Genome sequence of the enterobacterial phytopathogen Erwinia carotovora subsp. atroseptica and characterization of virulence factors.</title>
        <authorList>
            <person name="Bell K.S."/>
            <person name="Sebaihia M."/>
            <person name="Pritchard L."/>
            <person name="Holden M.T.G."/>
            <person name="Hyman L.J."/>
            <person name="Holeva M.C."/>
            <person name="Thomson N.R."/>
            <person name="Bentley S.D."/>
            <person name="Churcher L.J.C."/>
            <person name="Mungall K."/>
            <person name="Atkin R."/>
            <person name="Bason N."/>
            <person name="Brooks K."/>
            <person name="Chillingworth T."/>
            <person name="Clark K."/>
            <person name="Doggett J."/>
            <person name="Fraser A."/>
            <person name="Hance Z."/>
            <person name="Hauser H."/>
            <person name="Jagels K."/>
            <person name="Moule S."/>
            <person name="Norbertczak H."/>
            <person name="Ormond D."/>
            <person name="Price C."/>
            <person name="Quail M.A."/>
            <person name="Sanders M."/>
            <person name="Walker D."/>
            <person name="Whitehead S."/>
            <person name="Salmond G.P.C."/>
            <person name="Birch P.R.J."/>
            <person name="Parkhill J."/>
            <person name="Toth I.K."/>
        </authorList>
    </citation>
    <scope>NUCLEOTIDE SEQUENCE [LARGE SCALE GENOMIC DNA]</scope>
    <source>
        <strain>SCRI 1043 / ATCC BAA-672</strain>
    </source>
</reference>
<gene>
    <name type="ordered locus">ECA2349</name>
</gene>
<comment type="similarity">
    <text evidence="1">Belongs to the UPF0229 family.</text>
</comment>